<sequence length="137" mass="16349">MFSNWDIFLNYKNFTINQEIKNKLDLYYQILIQENQKYNLTRITELNEVFEKHFLDSLLFVEQFQIIDQKIADIGTGAGFPGIVLKIFFPNIKLTLIESNNKKANFLKYLVQKLELNNVEILNKRAEELNEYKEHLI</sequence>
<dbReference type="EC" id="2.1.1.-" evidence="1"/>
<dbReference type="EMBL" id="BX293980">
    <property type="protein sequence ID" value="CAE77523.1"/>
    <property type="molecule type" value="Genomic_DNA"/>
</dbReference>
<dbReference type="RefSeq" id="NP_975881.1">
    <property type="nucleotide sequence ID" value="NC_005364.2"/>
</dbReference>
<dbReference type="RefSeq" id="WP_011167063.1">
    <property type="nucleotide sequence ID" value="NC_005364.2"/>
</dbReference>
<dbReference type="SMR" id="Q6MS67"/>
<dbReference type="STRING" id="272632.MSC_0912"/>
<dbReference type="KEGG" id="mmy:MSC_0912"/>
<dbReference type="PATRIC" id="fig|272632.4.peg.984"/>
<dbReference type="eggNOG" id="COG0357">
    <property type="taxonomic scope" value="Bacteria"/>
</dbReference>
<dbReference type="HOGENOM" id="CLU_2012726_0_0_14"/>
<dbReference type="Proteomes" id="UP000001016">
    <property type="component" value="Chromosome"/>
</dbReference>
<dbReference type="GO" id="GO:0005829">
    <property type="term" value="C:cytosol"/>
    <property type="evidence" value="ECO:0007669"/>
    <property type="project" value="TreeGrafter"/>
</dbReference>
<dbReference type="GO" id="GO:0070043">
    <property type="term" value="F:rRNA (guanine-N7-)-methyltransferase activity"/>
    <property type="evidence" value="ECO:0007669"/>
    <property type="project" value="UniProtKB-UniRule"/>
</dbReference>
<dbReference type="Gene3D" id="3.40.50.150">
    <property type="entry name" value="Vaccinia Virus protein VP39"/>
    <property type="match status" value="1"/>
</dbReference>
<dbReference type="HAMAP" id="MF_00074">
    <property type="entry name" value="16SrRNA_methyltr_G"/>
    <property type="match status" value="1"/>
</dbReference>
<dbReference type="InterPro" id="IPR003682">
    <property type="entry name" value="rRNA_ssu_MeTfrase_G"/>
</dbReference>
<dbReference type="InterPro" id="IPR029063">
    <property type="entry name" value="SAM-dependent_MTases_sf"/>
</dbReference>
<dbReference type="NCBIfam" id="TIGR00138">
    <property type="entry name" value="rsmG_gidB"/>
    <property type="match status" value="1"/>
</dbReference>
<dbReference type="PANTHER" id="PTHR31760">
    <property type="entry name" value="S-ADENOSYL-L-METHIONINE-DEPENDENT METHYLTRANSFERASES SUPERFAMILY PROTEIN"/>
    <property type="match status" value="1"/>
</dbReference>
<dbReference type="PANTHER" id="PTHR31760:SF0">
    <property type="entry name" value="S-ADENOSYL-L-METHIONINE-DEPENDENT METHYLTRANSFERASES SUPERFAMILY PROTEIN"/>
    <property type="match status" value="1"/>
</dbReference>
<dbReference type="Pfam" id="PF02527">
    <property type="entry name" value="GidB"/>
    <property type="match status" value="1"/>
</dbReference>
<dbReference type="SUPFAM" id="SSF53335">
    <property type="entry name" value="S-adenosyl-L-methionine-dependent methyltransferases"/>
    <property type="match status" value="1"/>
</dbReference>
<accession>Q6MS67</accession>
<proteinExistence type="inferred from homology"/>
<feature type="chain" id="PRO_0000342931" description="Ribosomal RNA small subunit methyltransferase G">
    <location>
        <begin position="1"/>
        <end position="137"/>
    </location>
</feature>
<feature type="binding site" evidence="1">
    <location>
        <position position="75"/>
    </location>
    <ligand>
        <name>S-adenosyl-L-methionine</name>
        <dbReference type="ChEBI" id="CHEBI:59789"/>
    </ligand>
</feature>
<feature type="binding site" evidence="1">
    <location>
        <position position="80"/>
    </location>
    <ligand>
        <name>S-adenosyl-L-methionine</name>
        <dbReference type="ChEBI" id="CHEBI:59789"/>
    </ligand>
</feature>
<feature type="binding site" evidence="1">
    <location>
        <begin position="126"/>
        <end position="127"/>
    </location>
    <ligand>
        <name>S-adenosyl-L-methionine</name>
        <dbReference type="ChEBI" id="CHEBI:59789"/>
    </ligand>
</feature>
<organism>
    <name type="scientific">Mycoplasma mycoides subsp. mycoides SC (strain CCUG 32753 / NCTC 10114 / PG1)</name>
    <dbReference type="NCBI Taxonomy" id="272632"/>
    <lineage>
        <taxon>Bacteria</taxon>
        <taxon>Bacillati</taxon>
        <taxon>Mycoplasmatota</taxon>
        <taxon>Mollicutes</taxon>
        <taxon>Mycoplasmataceae</taxon>
        <taxon>Mycoplasma</taxon>
    </lineage>
</organism>
<keyword id="KW-0963">Cytoplasm</keyword>
<keyword id="KW-0489">Methyltransferase</keyword>
<keyword id="KW-1185">Reference proteome</keyword>
<keyword id="KW-0698">rRNA processing</keyword>
<keyword id="KW-0949">S-adenosyl-L-methionine</keyword>
<keyword id="KW-0808">Transferase</keyword>
<reference key="1">
    <citation type="journal article" date="2004" name="Genome Res.">
        <title>The genome sequence of Mycoplasma mycoides subsp. mycoides SC type strain PG1T, the causative agent of contagious bovine pleuropneumonia (CBPP).</title>
        <authorList>
            <person name="Westberg J."/>
            <person name="Persson A."/>
            <person name="Holmberg A."/>
            <person name="Goesmann A."/>
            <person name="Lundeberg J."/>
            <person name="Johansson K.-E."/>
            <person name="Pettersson B."/>
            <person name="Uhlen M."/>
        </authorList>
    </citation>
    <scope>NUCLEOTIDE SEQUENCE [LARGE SCALE GENOMIC DNA]</scope>
    <source>
        <strain>CCUG 32753 / NCTC 10114 / PG1</strain>
    </source>
</reference>
<protein>
    <recommendedName>
        <fullName evidence="1">Ribosomal RNA small subunit methyltransferase G</fullName>
        <ecNumber evidence="1">2.1.1.-</ecNumber>
    </recommendedName>
    <alternativeName>
        <fullName evidence="1">16S rRNA 7-methylguanosine methyltransferase</fullName>
        <shortName evidence="1">16S rRNA m7G methyltransferase</shortName>
    </alternativeName>
</protein>
<gene>
    <name evidence="1" type="primary">rsmG</name>
    <name type="ordered locus">MSC_0912</name>
</gene>
<name>RSMG_MYCMS</name>
<evidence type="ECO:0000255" key="1">
    <source>
        <dbReference type="HAMAP-Rule" id="MF_00074"/>
    </source>
</evidence>
<comment type="function">
    <text evidence="1">Specifically methylates the N7 position of a guanine in 16S rRNA.</text>
</comment>
<comment type="subcellular location">
    <subcellularLocation>
        <location evidence="1">Cytoplasm</location>
    </subcellularLocation>
</comment>
<comment type="similarity">
    <text evidence="1">Belongs to the methyltransferase superfamily. RNA methyltransferase RsmG family.</text>
</comment>